<reference key="1">
    <citation type="submission" date="2006-11" db="EMBL/GenBank/DDBJ databases">
        <title>Sequence of Campylobacter fetus subsp. fetus 82-40.</title>
        <authorList>
            <person name="Fouts D.E."/>
            <person name="Nelson K.E."/>
        </authorList>
    </citation>
    <scope>NUCLEOTIDE SEQUENCE [LARGE SCALE GENOMIC DNA]</scope>
    <source>
        <strain>82-40</strain>
    </source>
</reference>
<name>RL10_CAMFF</name>
<protein>
    <recommendedName>
        <fullName evidence="1">Large ribosomal subunit protein uL10</fullName>
    </recommendedName>
    <alternativeName>
        <fullName evidence="2">50S ribosomal protein L10</fullName>
    </alternativeName>
</protein>
<gene>
    <name evidence="1" type="primary">rplJ</name>
    <name type="ordered locus">CFF8240_1318</name>
</gene>
<keyword id="KW-0687">Ribonucleoprotein</keyword>
<keyword id="KW-0689">Ribosomal protein</keyword>
<keyword id="KW-0694">RNA-binding</keyword>
<keyword id="KW-0699">rRNA-binding</keyword>
<accession>A0RQI7</accession>
<comment type="function">
    <text evidence="1">Forms part of the ribosomal stalk, playing a central role in the interaction of the ribosome with GTP-bound translation factors.</text>
</comment>
<comment type="subunit">
    <text evidence="1">Part of the ribosomal stalk of the 50S ribosomal subunit. The N-terminus interacts with L11 and the large rRNA to form the base of the stalk. The C-terminus forms an elongated spine to which L12 dimers bind in a sequential fashion forming a multimeric L10(L12)X complex.</text>
</comment>
<comment type="similarity">
    <text evidence="1">Belongs to the universal ribosomal protein uL10 family.</text>
</comment>
<proteinExistence type="inferred from homology"/>
<dbReference type="EMBL" id="CP000487">
    <property type="protein sequence ID" value="ABK82796.1"/>
    <property type="molecule type" value="Genomic_DNA"/>
</dbReference>
<dbReference type="RefSeq" id="WP_002850117.1">
    <property type="nucleotide sequence ID" value="NC_008599.1"/>
</dbReference>
<dbReference type="SMR" id="A0RQI7"/>
<dbReference type="GeneID" id="61065136"/>
<dbReference type="KEGG" id="cff:CFF8240_1318"/>
<dbReference type="eggNOG" id="COG0244">
    <property type="taxonomic scope" value="Bacteria"/>
</dbReference>
<dbReference type="HOGENOM" id="CLU_092227_2_2_7"/>
<dbReference type="Proteomes" id="UP000000760">
    <property type="component" value="Chromosome"/>
</dbReference>
<dbReference type="GO" id="GO:0015934">
    <property type="term" value="C:large ribosomal subunit"/>
    <property type="evidence" value="ECO:0007669"/>
    <property type="project" value="InterPro"/>
</dbReference>
<dbReference type="GO" id="GO:0070180">
    <property type="term" value="F:large ribosomal subunit rRNA binding"/>
    <property type="evidence" value="ECO:0007669"/>
    <property type="project" value="UniProtKB-UniRule"/>
</dbReference>
<dbReference type="GO" id="GO:0003735">
    <property type="term" value="F:structural constituent of ribosome"/>
    <property type="evidence" value="ECO:0007669"/>
    <property type="project" value="InterPro"/>
</dbReference>
<dbReference type="GO" id="GO:0006412">
    <property type="term" value="P:translation"/>
    <property type="evidence" value="ECO:0007669"/>
    <property type="project" value="UniProtKB-UniRule"/>
</dbReference>
<dbReference type="CDD" id="cd05797">
    <property type="entry name" value="Ribosomal_L10"/>
    <property type="match status" value="1"/>
</dbReference>
<dbReference type="Gene3D" id="3.30.70.1730">
    <property type="match status" value="1"/>
</dbReference>
<dbReference type="Gene3D" id="6.10.250.290">
    <property type="match status" value="1"/>
</dbReference>
<dbReference type="HAMAP" id="MF_00362">
    <property type="entry name" value="Ribosomal_uL10"/>
    <property type="match status" value="1"/>
</dbReference>
<dbReference type="InterPro" id="IPR001790">
    <property type="entry name" value="Ribosomal_uL10"/>
</dbReference>
<dbReference type="InterPro" id="IPR043141">
    <property type="entry name" value="Ribosomal_uL10-like_sf"/>
</dbReference>
<dbReference type="InterPro" id="IPR022973">
    <property type="entry name" value="Ribosomal_uL10_bac"/>
</dbReference>
<dbReference type="InterPro" id="IPR047865">
    <property type="entry name" value="Ribosomal_uL10_bac_type"/>
</dbReference>
<dbReference type="InterPro" id="IPR002363">
    <property type="entry name" value="Ribosomal_uL10_CS_bac"/>
</dbReference>
<dbReference type="NCBIfam" id="NF000955">
    <property type="entry name" value="PRK00099.1-1"/>
    <property type="match status" value="1"/>
</dbReference>
<dbReference type="PANTHER" id="PTHR11560">
    <property type="entry name" value="39S RIBOSOMAL PROTEIN L10, MITOCHONDRIAL"/>
    <property type="match status" value="1"/>
</dbReference>
<dbReference type="Pfam" id="PF00466">
    <property type="entry name" value="Ribosomal_L10"/>
    <property type="match status" value="1"/>
</dbReference>
<dbReference type="SUPFAM" id="SSF160369">
    <property type="entry name" value="Ribosomal protein L10-like"/>
    <property type="match status" value="1"/>
</dbReference>
<dbReference type="PROSITE" id="PS01109">
    <property type="entry name" value="RIBOSOMAL_L10"/>
    <property type="match status" value="1"/>
</dbReference>
<sequence>MTRNEKAEIISNLEAEFKTSDAIVVCDYKGLSVKKLEALRNSARELNVKVQVVKNTLANIALNNCGKSGMELKDTNIFVWGEDQLAVTKVVAKFEESNNELFKIKTAHIDGEVASVSKVVALSKMPSRDELIAMLLQVWNAPIQNFTIGLNALREKKEQTA</sequence>
<evidence type="ECO:0000255" key="1">
    <source>
        <dbReference type="HAMAP-Rule" id="MF_00362"/>
    </source>
</evidence>
<evidence type="ECO:0000305" key="2"/>
<feature type="chain" id="PRO_1000005481" description="Large ribosomal subunit protein uL10">
    <location>
        <begin position="1"/>
        <end position="161"/>
    </location>
</feature>
<organism>
    <name type="scientific">Campylobacter fetus subsp. fetus (strain 82-40)</name>
    <dbReference type="NCBI Taxonomy" id="360106"/>
    <lineage>
        <taxon>Bacteria</taxon>
        <taxon>Pseudomonadati</taxon>
        <taxon>Campylobacterota</taxon>
        <taxon>Epsilonproteobacteria</taxon>
        <taxon>Campylobacterales</taxon>
        <taxon>Campylobacteraceae</taxon>
        <taxon>Campylobacter</taxon>
    </lineage>
</organism>